<evidence type="ECO:0000255" key="1">
    <source>
        <dbReference type="HAMAP-Rule" id="MF_00713"/>
    </source>
</evidence>
<keyword id="KW-0560">Oxidoreductase</keyword>
<keyword id="KW-0663">Pyridoxal phosphate</keyword>
<keyword id="KW-1185">Reference proteome</keyword>
<proteinExistence type="inferred from homology"/>
<reference key="1">
    <citation type="journal article" date="2004" name="Science">
        <title>The genomic sequence of the accidental pathogen Legionella pneumophila.</title>
        <authorList>
            <person name="Chien M."/>
            <person name="Morozova I."/>
            <person name="Shi S."/>
            <person name="Sheng H."/>
            <person name="Chen J."/>
            <person name="Gomez S.M."/>
            <person name="Asamani G."/>
            <person name="Hill K."/>
            <person name="Nuara J."/>
            <person name="Feder M."/>
            <person name="Rineer J."/>
            <person name="Greenberg J.J."/>
            <person name="Steshenko V."/>
            <person name="Park S.H."/>
            <person name="Zhao B."/>
            <person name="Teplitskaya E."/>
            <person name="Edwards J.R."/>
            <person name="Pampou S."/>
            <person name="Georghiou A."/>
            <person name="Chou I.-C."/>
            <person name="Iannuccilli W."/>
            <person name="Ulz M.E."/>
            <person name="Kim D.H."/>
            <person name="Geringer-Sameth A."/>
            <person name="Goldsberry C."/>
            <person name="Morozov P."/>
            <person name="Fischer S.G."/>
            <person name="Segal G."/>
            <person name="Qu X."/>
            <person name="Rzhetsky A."/>
            <person name="Zhang P."/>
            <person name="Cayanis E."/>
            <person name="De Jong P.J."/>
            <person name="Ju J."/>
            <person name="Kalachikov S."/>
            <person name="Shuman H.A."/>
            <person name="Russo J.J."/>
        </authorList>
    </citation>
    <scope>NUCLEOTIDE SEQUENCE [LARGE SCALE GENOMIC DNA]</scope>
    <source>
        <strain>Philadelphia 1 / ATCC 33152 / DSM 7513</strain>
    </source>
</reference>
<accession>Q5ZZ97</accession>
<comment type="function">
    <text evidence="1">The glycine cleavage system catalyzes the degradation of glycine. The P protein binds the alpha-amino group of glycine through its pyridoxal phosphate cofactor; CO(2) is released and the remaining methylamine moiety is then transferred to the lipoamide cofactor of the H protein.</text>
</comment>
<comment type="catalytic activity">
    <reaction evidence="1">
        <text>N(6)-[(R)-lipoyl]-L-lysyl-[glycine-cleavage complex H protein] + glycine + H(+) = N(6)-[(R)-S(8)-aminomethyldihydrolipoyl]-L-lysyl-[glycine-cleavage complex H protein] + CO2</text>
        <dbReference type="Rhea" id="RHEA:24304"/>
        <dbReference type="Rhea" id="RHEA-COMP:10494"/>
        <dbReference type="Rhea" id="RHEA-COMP:10495"/>
        <dbReference type="ChEBI" id="CHEBI:15378"/>
        <dbReference type="ChEBI" id="CHEBI:16526"/>
        <dbReference type="ChEBI" id="CHEBI:57305"/>
        <dbReference type="ChEBI" id="CHEBI:83099"/>
        <dbReference type="ChEBI" id="CHEBI:83143"/>
        <dbReference type="EC" id="1.4.4.2"/>
    </reaction>
</comment>
<comment type="cofactor">
    <cofactor evidence="1">
        <name>pyridoxal 5'-phosphate</name>
        <dbReference type="ChEBI" id="CHEBI:597326"/>
    </cofactor>
</comment>
<comment type="subunit">
    <text evidence="1">The glycine cleavage system is composed of four proteins: P, T, L and H. In this organism, the P 'protein' is a heterodimer of two subunits.</text>
</comment>
<comment type="similarity">
    <text evidence="1">Belongs to the GcvP family. C-terminal subunit subfamily.</text>
</comment>
<feature type="chain" id="PRO_1000045695" description="Probable glycine dehydrogenase (decarboxylating) subunit 2">
    <location>
        <begin position="1"/>
        <end position="484"/>
    </location>
</feature>
<feature type="modified residue" description="N6-(pyridoxal phosphate)lysine" evidence="1">
    <location>
        <position position="264"/>
    </location>
</feature>
<sequence length="484" mass="53379">MLIFELSKTGRQAKAQIPRAVSKNYSIPEEFQRKSPPRLPACSELQVVRHFTCLSQKNFSIDTNFYPLGSCTMKYNPRGVHKAASLPGFINRHPLAMDNESQGFLETLYKLQNYISEITGMPGVSLTPMAGSQGEFAGVAMIKAYHQSRGDTARDEILIPDAAHGTNPASAVMCGFKVVEIATAPDGDIDLDELKRKVGPRTAGIMLTNPSTLGLFMRQIKEIASLVHQAGGLLYYDGANLNAILGKVRPGDMGFDVMHLNLHKTFATPHGGGGPGAGPVAVGKRLIPYMPLPVVKKTDSGYHWATRQDYPQSIGRLSCFMGNAGILLRAYFYMLVLGKEGLLRVSEFATLNANYLLKELTKVGYTAAYPDRRASHEFILTLNSEKKNYDVTAMDFAKRLLDYGVHAPTTYFPLLVPECLLIEPPETESKEELDAFVAVMKIIREEASKQPDILKAAPHTLPVKRLDDVKAARELDLNYFATHE</sequence>
<organism>
    <name type="scientific">Legionella pneumophila subsp. pneumophila (strain Philadelphia 1 / ATCC 33152 / DSM 7513)</name>
    <dbReference type="NCBI Taxonomy" id="272624"/>
    <lineage>
        <taxon>Bacteria</taxon>
        <taxon>Pseudomonadati</taxon>
        <taxon>Pseudomonadota</taxon>
        <taxon>Gammaproteobacteria</taxon>
        <taxon>Legionellales</taxon>
        <taxon>Legionellaceae</taxon>
        <taxon>Legionella</taxon>
    </lineage>
</organism>
<gene>
    <name evidence="1" type="primary">gcvPB</name>
    <name type="ordered locus">lpg0114</name>
</gene>
<dbReference type="EC" id="1.4.4.2" evidence="1"/>
<dbReference type="EMBL" id="AE017354">
    <property type="protein sequence ID" value="AAU26221.1"/>
    <property type="molecule type" value="Genomic_DNA"/>
</dbReference>
<dbReference type="RefSeq" id="WP_010945875.1">
    <property type="nucleotide sequence ID" value="NC_002942.5"/>
</dbReference>
<dbReference type="RefSeq" id="YP_094168.1">
    <property type="nucleotide sequence ID" value="NC_002942.5"/>
</dbReference>
<dbReference type="SMR" id="Q5ZZ97"/>
<dbReference type="STRING" id="272624.lpg0114"/>
<dbReference type="PaxDb" id="272624-lpg0114"/>
<dbReference type="GeneID" id="57034121"/>
<dbReference type="KEGG" id="lpn:lpg0114"/>
<dbReference type="PATRIC" id="fig|272624.6.peg.120"/>
<dbReference type="eggNOG" id="COG1003">
    <property type="taxonomic scope" value="Bacteria"/>
</dbReference>
<dbReference type="HOGENOM" id="CLU_004620_5_0_6"/>
<dbReference type="OrthoDB" id="9801272at2"/>
<dbReference type="Proteomes" id="UP000000609">
    <property type="component" value="Chromosome"/>
</dbReference>
<dbReference type="GO" id="GO:0005829">
    <property type="term" value="C:cytosol"/>
    <property type="evidence" value="ECO:0007669"/>
    <property type="project" value="TreeGrafter"/>
</dbReference>
<dbReference type="GO" id="GO:0005960">
    <property type="term" value="C:glycine cleavage complex"/>
    <property type="evidence" value="ECO:0007669"/>
    <property type="project" value="TreeGrafter"/>
</dbReference>
<dbReference type="GO" id="GO:0016594">
    <property type="term" value="F:glycine binding"/>
    <property type="evidence" value="ECO:0007669"/>
    <property type="project" value="TreeGrafter"/>
</dbReference>
<dbReference type="GO" id="GO:0004375">
    <property type="term" value="F:glycine dehydrogenase (decarboxylating) activity"/>
    <property type="evidence" value="ECO:0007669"/>
    <property type="project" value="UniProtKB-EC"/>
</dbReference>
<dbReference type="GO" id="GO:0030170">
    <property type="term" value="F:pyridoxal phosphate binding"/>
    <property type="evidence" value="ECO:0007669"/>
    <property type="project" value="TreeGrafter"/>
</dbReference>
<dbReference type="GO" id="GO:0019464">
    <property type="term" value="P:glycine decarboxylation via glycine cleavage system"/>
    <property type="evidence" value="ECO:0007669"/>
    <property type="project" value="UniProtKB-UniRule"/>
</dbReference>
<dbReference type="FunFam" id="3.40.640.10:FF:000224">
    <property type="entry name" value="Probable glycine dehydrogenase (decarboxylating) subunit 2"/>
    <property type="match status" value="1"/>
</dbReference>
<dbReference type="FunFam" id="3.90.1150.10:FF:000014">
    <property type="entry name" value="Probable glycine dehydrogenase (decarboxylating) subunit 2"/>
    <property type="match status" value="1"/>
</dbReference>
<dbReference type="Gene3D" id="6.20.440.10">
    <property type="match status" value="1"/>
</dbReference>
<dbReference type="Gene3D" id="3.90.1150.10">
    <property type="entry name" value="Aspartate Aminotransferase, domain 1"/>
    <property type="match status" value="1"/>
</dbReference>
<dbReference type="Gene3D" id="3.40.640.10">
    <property type="entry name" value="Type I PLP-dependent aspartate aminotransferase-like (Major domain)"/>
    <property type="match status" value="1"/>
</dbReference>
<dbReference type="HAMAP" id="MF_00713">
    <property type="entry name" value="GcvPB"/>
    <property type="match status" value="1"/>
</dbReference>
<dbReference type="InterPro" id="IPR000192">
    <property type="entry name" value="Aminotrans_V_dom"/>
</dbReference>
<dbReference type="InterPro" id="IPR023012">
    <property type="entry name" value="GcvPB"/>
</dbReference>
<dbReference type="InterPro" id="IPR049316">
    <property type="entry name" value="GDC-P_C"/>
</dbReference>
<dbReference type="InterPro" id="IPR020581">
    <property type="entry name" value="GDC_P"/>
</dbReference>
<dbReference type="InterPro" id="IPR015424">
    <property type="entry name" value="PyrdxlP-dep_Trfase"/>
</dbReference>
<dbReference type="InterPro" id="IPR015421">
    <property type="entry name" value="PyrdxlP-dep_Trfase_major"/>
</dbReference>
<dbReference type="InterPro" id="IPR015422">
    <property type="entry name" value="PyrdxlP-dep_Trfase_small"/>
</dbReference>
<dbReference type="NCBIfam" id="NF003346">
    <property type="entry name" value="PRK04366.1"/>
    <property type="match status" value="1"/>
</dbReference>
<dbReference type="PANTHER" id="PTHR11773:SF1">
    <property type="entry name" value="GLYCINE DEHYDROGENASE (DECARBOXYLATING), MITOCHONDRIAL"/>
    <property type="match status" value="1"/>
</dbReference>
<dbReference type="PANTHER" id="PTHR11773">
    <property type="entry name" value="GLYCINE DEHYDROGENASE, DECARBOXYLATING"/>
    <property type="match status" value="1"/>
</dbReference>
<dbReference type="Pfam" id="PF00266">
    <property type="entry name" value="Aminotran_5"/>
    <property type="match status" value="1"/>
</dbReference>
<dbReference type="Pfam" id="PF21478">
    <property type="entry name" value="GcvP2_C"/>
    <property type="match status" value="1"/>
</dbReference>
<dbReference type="SUPFAM" id="SSF53383">
    <property type="entry name" value="PLP-dependent transferases"/>
    <property type="match status" value="1"/>
</dbReference>
<name>GCSPB_LEGPH</name>
<protein>
    <recommendedName>
        <fullName evidence="1">Probable glycine dehydrogenase (decarboxylating) subunit 2</fullName>
        <ecNumber evidence="1">1.4.4.2</ecNumber>
    </recommendedName>
    <alternativeName>
        <fullName evidence="1">Glycine cleavage system P-protein subunit 2</fullName>
    </alternativeName>
    <alternativeName>
        <fullName evidence="1">Glycine decarboxylase subunit 2</fullName>
    </alternativeName>
    <alternativeName>
        <fullName evidence="1">Glycine dehydrogenase (aminomethyl-transferring) subunit 2</fullName>
    </alternativeName>
</protein>